<reference key="1">
    <citation type="journal article" date="1996" name="Mol. Microbiol.">
        <title>Organizational characteristics and information content of an archaeal genome: 156 kb of sequence from Sulfolobus solfataricus P2.</title>
        <authorList>
            <person name="Sensen C.W."/>
            <person name="Klenk H.-P."/>
            <person name="Singh R.K."/>
            <person name="Allard G."/>
            <person name="Chan C.C.-Y."/>
            <person name="Liu Q.Y."/>
            <person name="Penny S.L."/>
            <person name="Young F."/>
            <person name="Schenk M.E."/>
            <person name="Gaasterland T."/>
            <person name="Doolittle W.F."/>
            <person name="Ragan M.A."/>
            <person name="Charlebois R.L."/>
        </authorList>
    </citation>
    <scope>NUCLEOTIDE SEQUENCE [GENOMIC DNA]</scope>
    <source>
        <strain>ATCC 35092 / DSM 1617 / JCM 11322 / P2</strain>
    </source>
</reference>
<reference key="2">
    <citation type="journal article" date="2001" name="Proc. Natl. Acad. Sci. U.S.A.">
        <title>The complete genome of the crenarchaeon Sulfolobus solfataricus P2.</title>
        <authorList>
            <person name="She Q."/>
            <person name="Singh R.K."/>
            <person name="Confalonieri F."/>
            <person name="Zivanovic Y."/>
            <person name="Allard G."/>
            <person name="Awayez M.J."/>
            <person name="Chan-Weiher C.C.-Y."/>
            <person name="Clausen I.G."/>
            <person name="Curtis B.A."/>
            <person name="De Moors A."/>
            <person name="Erauso G."/>
            <person name="Fletcher C."/>
            <person name="Gordon P.M.K."/>
            <person name="Heikamp-de Jong I."/>
            <person name="Jeffries A.C."/>
            <person name="Kozera C.J."/>
            <person name="Medina N."/>
            <person name="Peng X."/>
            <person name="Thi-Ngoc H.P."/>
            <person name="Redder P."/>
            <person name="Schenk M.E."/>
            <person name="Theriault C."/>
            <person name="Tolstrup N."/>
            <person name="Charlebois R.L."/>
            <person name="Doolittle W.F."/>
            <person name="Duguet M."/>
            <person name="Gaasterland T."/>
            <person name="Garrett R.A."/>
            <person name="Ragan M.A."/>
            <person name="Sensen C.W."/>
            <person name="Van der Oost J."/>
        </authorList>
    </citation>
    <scope>NUCLEOTIDE SEQUENCE [LARGE SCALE GENOMIC DNA]</scope>
    <source>
        <strain>ATCC 35092 / DSM 1617 / JCM 11322 / P2</strain>
    </source>
</reference>
<reference key="3">
    <citation type="journal article" date="2007" name="Biochem. J.">
        <title>A novel DNA helicase with strand-annealing activity from the crenarchaeon Sulfolobus solfataricus.</title>
        <authorList>
            <person name="De Felice M."/>
            <person name="Aria V."/>
            <person name="Esposito L."/>
            <person name="De Falco M."/>
            <person name="Pucci B."/>
            <person name="Rossi M."/>
            <person name="Pisani F.M."/>
        </authorList>
    </citation>
    <scope>FUNCTION AS A HELICASE</scope>
    <scope>FUNCTION AS AN ATPASE</scope>
    <scope>CATALYTIC ACTIVITY</scope>
    <scope>SUBUNIT</scope>
    <scope>DNA-BINDING</scope>
    <source>
        <strain>ATCC 35092 / DSM 1617 / JCM 11322 / P2</strain>
    </source>
</reference>
<reference key="4">
    <citation type="journal article" date="2012" name="J. Biol. Chem.">
        <title>Synergic and opposing activities of thermophilic RecQ-like helicase and topoisomerase 3 proteins in Holliday junction processing and replication fork stabilization.</title>
        <authorList>
            <person name="Valenti A."/>
            <person name="De Felice M."/>
            <person name="Perugino G."/>
            <person name="Bizard A."/>
            <person name="Nadal M."/>
            <person name="Rossi M."/>
            <person name="Ciaramella M."/>
        </authorList>
    </citation>
    <scope>FUNCTION AS A HELICASE</scope>
    <scope>FUNCTION AS AN ATPASE</scope>
    <scope>ACTIVITY REGULATION</scope>
    <scope>SUBUNIT</scope>
    <scope>INTERACTION WITH TOP3</scope>
    <scope>DNA-BINDING</scope>
</reference>
<reference key="5">
    <citation type="journal article" date="2018" name="Extremophiles">
        <title>The Sulfolobus solfataricus RecQ-like DNA helicase Hel112 inhibits the NurA/HerA complex exonuclease activity.</title>
        <authorList>
            <person name="De Falco M."/>
            <person name="Massa F."/>
            <person name="Rossi M."/>
            <person name="De Felice M."/>
        </authorList>
    </citation>
    <scope>FUNCTION</scope>
    <source>
        <strain>ATCC 35092 / DSM 1617 / JCM 11322 / P2</strain>
    </source>
</reference>
<dbReference type="EC" id="5.6.2.4" evidence="4"/>
<dbReference type="EMBL" id="Y08257">
    <property type="protein sequence ID" value="CAA69580.1"/>
    <property type="molecule type" value="Genomic_DNA"/>
</dbReference>
<dbReference type="EMBL" id="AE006641">
    <property type="protein sequence ID" value="AAK40467.1"/>
    <property type="molecule type" value="Genomic_DNA"/>
</dbReference>
<dbReference type="PIR" id="S75377">
    <property type="entry name" value="S75377"/>
</dbReference>
<dbReference type="RefSeq" id="WP_009988933.1">
    <property type="nucleotide sequence ID" value="NC_002754.1"/>
</dbReference>
<dbReference type="SMR" id="P95949"/>
<dbReference type="FunCoup" id="P95949">
    <property type="interactions" value="10"/>
</dbReference>
<dbReference type="STRING" id="273057.SSO0112"/>
<dbReference type="PaxDb" id="273057-SSO0112"/>
<dbReference type="EnsemblBacteria" id="AAK40467">
    <property type="protein sequence ID" value="AAK40467"/>
    <property type="gene ID" value="SSO0112"/>
</dbReference>
<dbReference type="KEGG" id="sso:SSO0112"/>
<dbReference type="PATRIC" id="fig|273057.12.peg.107"/>
<dbReference type="eggNOG" id="arCOG00557">
    <property type="taxonomic scope" value="Archaea"/>
</dbReference>
<dbReference type="HOGENOM" id="CLU_002025_0_0_2"/>
<dbReference type="InParanoid" id="P95949"/>
<dbReference type="PhylomeDB" id="P95949"/>
<dbReference type="BRENDA" id="3.6.4.12">
    <property type="organism ID" value="6163"/>
</dbReference>
<dbReference type="Proteomes" id="UP000001974">
    <property type="component" value="Chromosome"/>
</dbReference>
<dbReference type="GO" id="GO:0005524">
    <property type="term" value="F:ATP binding"/>
    <property type="evidence" value="ECO:0007669"/>
    <property type="project" value="UniProtKB-KW"/>
</dbReference>
<dbReference type="GO" id="GO:0016887">
    <property type="term" value="F:ATP hydrolysis activity"/>
    <property type="evidence" value="ECO:0000318"/>
    <property type="project" value="GO_Central"/>
</dbReference>
<dbReference type="GO" id="GO:0140097">
    <property type="term" value="F:catalytic activity, acting on DNA"/>
    <property type="evidence" value="ECO:0007669"/>
    <property type="project" value="UniProtKB-ARBA"/>
</dbReference>
<dbReference type="GO" id="GO:0003677">
    <property type="term" value="F:DNA binding"/>
    <property type="evidence" value="ECO:0000318"/>
    <property type="project" value="GO_Central"/>
</dbReference>
<dbReference type="GO" id="GO:0004386">
    <property type="term" value="F:helicase activity"/>
    <property type="evidence" value="ECO:0007669"/>
    <property type="project" value="UniProtKB-KW"/>
</dbReference>
<dbReference type="CDD" id="cd17922">
    <property type="entry name" value="DEXHc_LHR-like"/>
    <property type="match status" value="1"/>
</dbReference>
<dbReference type="CDD" id="cd18796">
    <property type="entry name" value="SF2_C_LHR"/>
    <property type="match status" value="1"/>
</dbReference>
<dbReference type="Gene3D" id="3.40.50.300">
    <property type="entry name" value="P-loop containing nucleotide triphosphate hydrolases"/>
    <property type="match status" value="2"/>
</dbReference>
<dbReference type="InterPro" id="IPR052511">
    <property type="entry name" value="ATP-dep_Helicase"/>
</dbReference>
<dbReference type="InterPro" id="IPR013701">
    <property type="entry name" value="DEAD/DEAH_assoc"/>
</dbReference>
<dbReference type="InterPro" id="IPR011545">
    <property type="entry name" value="DEAD/DEAH_box_helicase_dom"/>
</dbReference>
<dbReference type="InterPro" id="IPR014001">
    <property type="entry name" value="Helicase_ATP-bd"/>
</dbReference>
<dbReference type="InterPro" id="IPR001650">
    <property type="entry name" value="Helicase_C-like"/>
</dbReference>
<dbReference type="InterPro" id="IPR017170">
    <property type="entry name" value="Lhr-like_ATP-dep_RNA_helic_prd"/>
</dbReference>
<dbReference type="InterPro" id="IPR045628">
    <property type="entry name" value="Lhr_WH_dom"/>
</dbReference>
<dbReference type="InterPro" id="IPR027417">
    <property type="entry name" value="P-loop_NTPase"/>
</dbReference>
<dbReference type="NCBIfam" id="NF010338">
    <property type="entry name" value="PRK13767.1"/>
    <property type="match status" value="1"/>
</dbReference>
<dbReference type="PANTHER" id="PTHR47962">
    <property type="entry name" value="ATP-DEPENDENT HELICASE LHR-RELATED-RELATED"/>
    <property type="match status" value="1"/>
</dbReference>
<dbReference type="PANTHER" id="PTHR47962:SF6">
    <property type="entry name" value="LARGE HELICASE-RELATED PROTEIN"/>
    <property type="match status" value="1"/>
</dbReference>
<dbReference type="Pfam" id="PF00270">
    <property type="entry name" value="DEAD"/>
    <property type="match status" value="1"/>
</dbReference>
<dbReference type="Pfam" id="PF08494">
    <property type="entry name" value="DEAD_assoc"/>
    <property type="match status" value="1"/>
</dbReference>
<dbReference type="Pfam" id="PF00271">
    <property type="entry name" value="Helicase_C"/>
    <property type="match status" value="1"/>
</dbReference>
<dbReference type="Pfam" id="PF19306">
    <property type="entry name" value="WH_Lhr"/>
    <property type="match status" value="1"/>
</dbReference>
<dbReference type="PIRSF" id="PIRSF037307">
    <property type="entry name" value="Lhr-like_helic_prd"/>
    <property type="match status" value="1"/>
</dbReference>
<dbReference type="SMART" id="SM00487">
    <property type="entry name" value="DEXDc"/>
    <property type="match status" value="1"/>
</dbReference>
<dbReference type="SMART" id="SM00490">
    <property type="entry name" value="HELICc"/>
    <property type="match status" value="1"/>
</dbReference>
<dbReference type="SUPFAM" id="SSF52540">
    <property type="entry name" value="P-loop containing nucleoside triphosphate hydrolases"/>
    <property type="match status" value="1"/>
</dbReference>
<dbReference type="PROSITE" id="PS51192">
    <property type="entry name" value="HELICASE_ATP_BIND_1"/>
    <property type="match status" value="1"/>
</dbReference>
<dbReference type="PROSITE" id="PS51194">
    <property type="entry name" value="HELICASE_CTER"/>
    <property type="match status" value="1"/>
</dbReference>
<evidence type="ECO:0000250" key="1">
    <source>
        <dbReference type="UniProtKB" id="A0QT91"/>
    </source>
</evidence>
<evidence type="ECO:0000255" key="2">
    <source>
        <dbReference type="PROSITE-ProRule" id="PRU00541"/>
    </source>
</evidence>
<evidence type="ECO:0000255" key="3">
    <source>
        <dbReference type="PROSITE-ProRule" id="PRU00542"/>
    </source>
</evidence>
<evidence type="ECO:0000269" key="4">
    <source>
    </source>
</evidence>
<evidence type="ECO:0000269" key="5">
    <source>
    </source>
</evidence>
<evidence type="ECO:0000303" key="6">
    <source>
    </source>
</evidence>
<evidence type="ECO:0000305" key="7"/>
<evidence type="ECO:0000305" key="8">
    <source>
    </source>
</evidence>
<protein>
    <recommendedName>
        <fullName>ATP-dependent helicase Lhr-Core</fullName>
        <ecNumber evidence="4">5.6.2.4</ecNumber>
    </recommendedName>
    <alternativeName>
        <fullName evidence="7">DNA 3'-5' helicase Lhr-Core</fullName>
    </alternativeName>
    <alternativeName>
        <fullName evidence="6">Hel112</fullName>
    </alternativeName>
</protein>
<comment type="function">
    <text evidence="4 5">DNA helicase that translocates in a 3'-5' direction on single-stranded (ss)DNA, probably involved in DNA repair. Unwinds DNA in a 3'-5' direction, unwinding is ATP-dependent, acts preferentially on fork and 3'-tailed DNA; bubble and blunt-ended double-stranded (ds)DNA are not substrates (PubMed:17683280). Has winding and unwinding activity, unwinds Holliday junction (HJ) DNA in the presence of ATP, the main product is forked DNA, single-stranded binding protein (SSB) does not stimulate activity (PubMed:22722926). Anneals complementary oligonucleotides in an ATP-independent manner to form HJ and fork structures, thus can perform strand exchange (PubMed:17683280, PubMed:22722926). Preferentially binds HJ, forked and ssDNA, dsDNA is bound less well (PubMed:17683280, PubMed:22722926). LhrC-Core (Hel112) inhibits the exonuclease activity of the HerA-NurA complex on ss- and dsDNA, has no effect on ssDNA nicking by NurA (PubMed:29488113); HerA-NurA are involved in DNA end-resection during DNA double-strand break repair (PubMed:29488113).</text>
</comment>
<comment type="catalytic activity">
    <reaction evidence="4 8">
        <text>Couples ATP hydrolysis with the unwinding of duplex DNA by translocating in the 3'-5' direction.</text>
        <dbReference type="EC" id="5.6.2.4"/>
    </reaction>
</comment>
<comment type="catalytic activity">
    <reaction evidence="4 5">
        <text>ATP + H2O = ADP + phosphate + H(+)</text>
        <dbReference type="Rhea" id="RHEA:13065"/>
        <dbReference type="ChEBI" id="CHEBI:15377"/>
        <dbReference type="ChEBI" id="CHEBI:15378"/>
        <dbReference type="ChEBI" id="CHEBI:30616"/>
        <dbReference type="ChEBI" id="CHEBI:43474"/>
        <dbReference type="ChEBI" id="CHEBI:456216"/>
        <dbReference type="EC" id="5.6.2.4"/>
    </reaction>
</comment>
<comment type="activity regulation">
    <text evidence="5">DNA topoisomerase 3 (topA) inhibits helicase activity on Holliday junctions (HJ) but has no effect on ATPase activity.</text>
</comment>
<comment type="subunit">
    <text evidence="4 5 8">Monomer and homodimer (PubMed:17683280). The monomeric form has helicase, ATPase and strand annealing activities (PubMed:17683280, PubMed:22722926), while the dimeric form only has ATPAse and strand annealing activities (PubMed:17683280). Interacts with DNA topoisomerase 3 (topA) (Probable).</text>
</comment>
<comment type="domain">
    <text evidence="1">Composed of 2 helicase domains, a winged-helix (WH) domain, and Lhr-specific domain 4.</text>
</comment>
<comment type="similarity">
    <text evidence="7">Belongs to the Lhr helicase family. Lhr-Core subfamily.</text>
</comment>
<accession>P95949</accession>
<gene>
    <name type="ordered locus">SSO0112</name>
    <name type="ORF">C04_010</name>
</gene>
<proteinExistence type="evidence at protein level"/>
<name>LHRC_SACS2</name>
<keyword id="KW-0067">ATP-binding</keyword>
<keyword id="KW-0227">DNA damage</keyword>
<keyword id="KW-0234">DNA repair</keyword>
<keyword id="KW-0238">DNA-binding</keyword>
<keyword id="KW-0347">Helicase</keyword>
<keyword id="KW-0378">Hydrolase</keyword>
<keyword id="KW-0413">Isomerase</keyword>
<keyword id="KW-0547">Nucleotide-binding</keyword>
<keyword id="KW-1185">Reference proteome</keyword>
<organism>
    <name type="scientific">Saccharolobus solfataricus (strain ATCC 35092 / DSM 1617 / JCM 11322 / P2)</name>
    <name type="common">Sulfolobus solfataricus</name>
    <dbReference type="NCBI Taxonomy" id="273057"/>
    <lineage>
        <taxon>Archaea</taxon>
        <taxon>Thermoproteota</taxon>
        <taxon>Thermoprotei</taxon>
        <taxon>Sulfolobales</taxon>
        <taxon>Sulfolobaceae</taxon>
        <taxon>Saccharolobus</taxon>
    </lineage>
</organism>
<sequence>MSNTYFYSDEEIYNLLRPYVAKWFRQKYTTFTPPQRAAIPLIKQNYNVLVSSPTGSGKTLAAFLGILDSLFELGDNNELEDKVYAIYISPLRALNNDMQRNLLEPLNELRQVNSKLPDVRVGIRTSDTTPYEKQKMLKKPPHILITTPESFGISITSPKFSQKLTDVKWIIVDEIHELANSKRGAYLSAMLELFRNLITKKEFVRIGLSATVSPLEEVAQFLVGKDREYRIVDARFVKPVDIKVISPVKDLVHSSESEVDKGIYKTILNEVKKHRTTLIFTNTRHATERVAYKLRKLAENEKVFDVDAIEAHHSSLSRDVRLDVEEKLKKGILKVVVSSTSLELGIDIGYIDLVILLSSPKSVSRLLQRIGRAGHHIRSISKGRVIVVDRDDLVECSVLAKLARDRKIDSIHIPKNPLDVLSQIIVSASLISPIDRDDLFKILRRSYNFSDLSESDYSLVLRYLSGDFFGVELKNVYAKIRIKEEKIIYPKKGSRLIFYTNSGTIPDEAMISVVTENNRYVGNLEEEFVEILSPGDIFVLSGRTYEFIGSKGSKVIVKEAMGQRPTVPSWFSEMLPLAYESALEIGKFRREIAEMIKKGVTHNEIIESISKEYEIDKHASMSIYTYILEQYLFTNGKVPSDNLILIEIYDDEEGIRNYIFHALYGRRALDALSRAFAYVVSEELDTDVRVSVTDNGFALSVKRDVPFDYNIKSLFEKITPDNVYDIVTRAVMRTEMLKRRFRHCAERSFMILRRYKGRETNLERRELNSEILLKAIREIGNFPVMKETIREILEDHMDILRAKEILKKIASQEIKVDVFGPTNIPSPFSHSIILKGHSDVVLAEDRRELLKKLHERVVEFLRQKGVNIELEYTSV</sequence>
<feature type="chain" id="PRO_0000102198" description="ATP-dependent helicase Lhr-Core">
    <location>
        <begin position="1"/>
        <end position="875"/>
    </location>
</feature>
<feature type="domain" description="Helicase ATP-binding" evidence="2">
    <location>
        <begin position="39"/>
        <end position="230"/>
    </location>
</feature>
<feature type="domain" description="Helicase C-terminal" evidence="3">
    <location>
        <begin position="247"/>
        <end position="419"/>
    </location>
</feature>
<feature type="region of interest" description="WH domain" evidence="1">
    <location>
        <begin position="420"/>
        <end position="506"/>
    </location>
</feature>
<feature type="region of interest" description="Domain 4" evidence="1">
    <location>
        <begin position="507"/>
        <end position="875"/>
    </location>
</feature>
<feature type="short sequence motif" description="DEIH box">
    <location>
        <begin position="173"/>
        <end position="176"/>
    </location>
</feature>
<feature type="binding site" evidence="1">
    <location>
        <position position="35"/>
    </location>
    <ligand>
        <name>ATP</name>
        <dbReference type="ChEBI" id="CHEBI:30616"/>
    </ligand>
</feature>
<feature type="binding site" evidence="1">
    <location>
        <position position="58"/>
    </location>
    <ligand>
        <name>ATP</name>
        <dbReference type="ChEBI" id="CHEBI:30616"/>
    </ligand>
</feature>
<feature type="binding site" evidence="1">
    <location>
        <position position="59"/>
    </location>
    <ligand>
        <name>ATP</name>
        <dbReference type="ChEBI" id="CHEBI:30616"/>
    </ligand>
</feature>
<feature type="binding site" evidence="1">
    <location>
        <position position="173"/>
    </location>
    <ligand>
        <name>ATP</name>
        <dbReference type="ChEBI" id="CHEBI:30616"/>
    </ligand>
</feature>
<feature type="binding site" evidence="1">
    <location>
        <position position="174"/>
    </location>
    <ligand>
        <name>ATP</name>
        <dbReference type="ChEBI" id="CHEBI:30616"/>
    </ligand>
</feature>
<feature type="binding site" evidence="1">
    <location>
        <position position="355"/>
    </location>
    <ligand>
        <name>ATP</name>
        <dbReference type="ChEBI" id="CHEBI:30616"/>
    </ligand>
</feature>
<feature type="binding site" evidence="1">
    <location>
        <position position="372"/>
    </location>
    <ligand>
        <name>ATP</name>
        <dbReference type="ChEBI" id="CHEBI:30616"/>
    </ligand>
</feature>
<feature type="binding site" evidence="1">
    <location>
        <position position="375"/>
    </location>
    <ligand>
        <name>ATP</name>
        <dbReference type="ChEBI" id="CHEBI:30616"/>
    </ligand>
</feature>
<feature type="site" description="Wedges between bases of the loading strand" evidence="1">
    <location>
        <position position="505"/>
    </location>
</feature>